<reference key="1">
    <citation type="journal article" date="1999" name="Appl. Environ. Microbiol.">
        <title>Cloning and analysis of the L-lactate utilization genes from Streptococcus iniae.</title>
        <authorList>
            <person name="Gibello A."/>
            <person name="Collins M.D."/>
            <person name="Dominguez L."/>
            <person name="Fernandez-Garayzabal J.F."/>
            <person name="Richardson P.T."/>
        </authorList>
    </citation>
    <scope>NUCLEOTIDE SEQUENCE [GENOMIC DNA]</scope>
    <scope>FUNCTION</scope>
    <scope>CATALYTIC ACTIVITY</scope>
    <scope>INDUCTION</scope>
    <source>
        <strain>ATCC 29178 / DSM 20576 / CIP 102508 / KCTC 3657 / LMG 14520 / NCIMB 702722 / PW</strain>
    </source>
</reference>
<organism>
    <name type="scientific">Streptococcus iniae</name>
    <name type="common">Streptococcus shiloi</name>
    <dbReference type="NCBI Taxonomy" id="1346"/>
    <lineage>
        <taxon>Bacteria</taxon>
        <taxon>Bacillati</taxon>
        <taxon>Bacillota</taxon>
        <taxon>Bacilli</taxon>
        <taxon>Lactobacillales</taxon>
        <taxon>Streptococcaceae</taxon>
        <taxon>Streptococcus</taxon>
    </lineage>
</organism>
<dbReference type="EC" id="1.1.3.-" evidence="3"/>
<dbReference type="EMBL" id="Y07622">
    <property type="protein sequence ID" value="CAA68903.1"/>
    <property type="molecule type" value="Genomic_DNA"/>
</dbReference>
<dbReference type="SMR" id="O33655"/>
<dbReference type="STRING" id="1346.BMF34_07105"/>
<dbReference type="eggNOG" id="COG1304">
    <property type="taxonomic scope" value="Bacteria"/>
</dbReference>
<dbReference type="BRENDA" id="1.1.3.2">
    <property type="organism ID" value="8080"/>
</dbReference>
<dbReference type="GO" id="GO:0010181">
    <property type="term" value="F:FMN binding"/>
    <property type="evidence" value="ECO:0007669"/>
    <property type="project" value="InterPro"/>
</dbReference>
<dbReference type="GO" id="GO:0050040">
    <property type="term" value="F:lactate 2-monooxygenase activity"/>
    <property type="evidence" value="ECO:0007669"/>
    <property type="project" value="UniProtKB-EC"/>
</dbReference>
<dbReference type="CDD" id="cd04737">
    <property type="entry name" value="LOX_like_FMN"/>
    <property type="match status" value="1"/>
</dbReference>
<dbReference type="Gene3D" id="3.20.20.70">
    <property type="entry name" value="Aldolase class I"/>
    <property type="match status" value="1"/>
</dbReference>
<dbReference type="InterPro" id="IPR013785">
    <property type="entry name" value="Aldolase_TIM"/>
</dbReference>
<dbReference type="InterPro" id="IPR012133">
    <property type="entry name" value="Alpha-hydoxy_acid_DH_FMN"/>
</dbReference>
<dbReference type="InterPro" id="IPR000262">
    <property type="entry name" value="FMN-dep_DH"/>
</dbReference>
<dbReference type="InterPro" id="IPR037396">
    <property type="entry name" value="FMN_HAD"/>
</dbReference>
<dbReference type="InterPro" id="IPR014080">
    <property type="entry name" value="L_lactate_ox"/>
</dbReference>
<dbReference type="NCBIfam" id="TIGR02708">
    <property type="entry name" value="L_lactate_ox"/>
    <property type="match status" value="1"/>
</dbReference>
<dbReference type="PANTHER" id="PTHR10578:SF107">
    <property type="entry name" value="2-HYDROXYACID OXIDASE 1"/>
    <property type="match status" value="1"/>
</dbReference>
<dbReference type="PANTHER" id="PTHR10578">
    <property type="entry name" value="S -2-HYDROXY-ACID OXIDASE-RELATED"/>
    <property type="match status" value="1"/>
</dbReference>
<dbReference type="Pfam" id="PF01070">
    <property type="entry name" value="FMN_dh"/>
    <property type="match status" value="1"/>
</dbReference>
<dbReference type="PIRSF" id="PIRSF000138">
    <property type="entry name" value="Al-hdrx_acd_dh"/>
    <property type="match status" value="1"/>
</dbReference>
<dbReference type="SUPFAM" id="SSF51395">
    <property type="entry name" value="FMN-linked oxidoreductases"/>
    <property type="match status" value="1"/>
</dbReference>
<dbReference type="PROSITE" id="PS51349">
    <property type="entry name" value="FMN_HYDROXY_ACID_DH_2"/>
    <property type="match status" value="1"/>
</dbReference>
<sequence length="403" mass="44120">MENKSEMINATTIEFKTSSAEGSVDFVNVFDLEKMAQKVIPKGAFGYIASGAGDTFTLHENIRSFNHKLIPHGLKGVENPSTEITFIGDKLASPIILAPVAAHKLANEQGEIASAKGVKEFGTIYTTSSYSTTDLPEISQTLGDSPHWFQFYYSKDDGINRHIMDRLKAEGVKSIVLTVDATVGGNREVDKRNGFVFPVGMPIVQEYLPNGAGKTMDYVYKATKQALSPKDVEYIAQYSGLPVYVKGPQCAEDAFRALEAGASGIWVTNHGGRQLDGGPAAFDSLQEVAESVDRRVPIVFDSGVRRGQHVFKALASGADLVALGRPVIYGLAMGGSVGTRQVFEKINDELKMVMQLAGTQTIDDVKHFKLRHNPYDSSIPFSPKCFKIRLIFRRPNQILGQFF</sequence>
<comment type="function">
    <text evidence="3">Catalyzes the oxidation of (S)-lactate (L-lactate) to pyruvate, with a reduction of O2 to H2O2. Is likely involved in the L-lactate aerobic metabolism of S.iniae that enables the bacterium to utilize L-lactate as an energy source for growth under aerobic conditions in the absence (or at low concentrations) of glucose.</text>
</comment>
<comment type="catalytic activity">
    <reaction evidence="3">
        <text>(S)-lactate + O2 = pyruvate + H2O2</text>
        <dbReference type="Rhea" id="RHEA:55868"/>
        <dbReference type="ChEBI" id="CHEBI:15361"/>
        <dbReference type="ChEBI" id="CHEBI:15379"/>
        <dbReference type="ChEBI" id="CHEBI:16240"/>
        <dbReference type="ChEBI" id="CHEBI:16651"/>
    </reaction>
    <physiologicalReaction direction="left-to-right" evidence="5">
        <dbReference type="Rhea" id="RHEA:55869"/>
    </physiologicalReaction>
</comment>
<comment type="cofactor">
    <cofactor evidence="1">
        <name>FMN</name>
        <dbReference type="ChEBI" id="CHEBI:58210"/>
    </cofactor>
    <text evidence="1">Binds 1 FMN per subunit.</text>
</comment>
<comment type="subunit">
    <text evidence="1">Homotetramer.</text>
</comment>
<comment type="induction">
    <text evidence="3">Induced during growth on L-lactate. Repressed by glucose.</text>
</comment>
<comment type="similarity">
    <text evidence="2">Belongs to the FMN-dependent alpha-hydroxy acid dehydrogenase family.</text>
</comment>
<keyword id="KW-0285">Flavoprotein</keyword>
<keyword id="KW-0288">FMN</keyword>
<keyword id="KW-0560">Oxidoreductase</keyword>
<feature type="chain" id="PRO_0000428946" description="L-lactate oxidase">
    <location>
        <begin position="1"/>
        <end position="403"/>
    </location>
</feature>
<feature type="domain" description="FMN hydroxy acid dehydrogenase" evidence="2">
    <location>
        <begin position="21"/>
        <end position="375"/>
    </location>
</feature>
<feature type="active site" description="Proton acceptor" evidence="1">
    <location>
        <position position="270"/>
    </location>
</feature>
<feature type="binding site" evidence="1">
    <location>
        <position position="47"/>
    </location>
    <ligand>
        <name>pyruvate</name>
        <dbReference type="ChEBI" id="CHEBI:15361"/>
    </ligand>
</feature>
<feature type="binding site" evidence="1">
    <location>
        <begin position="99"/>
        <end position="101"/>
    </location>
    <ligand>
        <name>FMN</name>
        <dbReference type="ChEBI" id="CHEBI:58210"/>
    </ligand>
</feature>
<feature type="binding site" evidence="1">
    <location>
        <position position="128"/>
    </location>
    <ligand>
        <name>FMN</name>
        <dbReference type="ChEBI" id="CHEBI:58210"/>
    </ligand>
</feature>
<feature type="binding site" evidence="1">
    <location>
        <position position="150"/>
    </location>
    <ligand>
        <name>FMN</name>
        <dbReference type="ChEBI" id="CHEBI:58210"/>
    </ligand>
</feature>
<feature type="binding site" evidence="1">
    <location>
        <position position="152"/>
    </location>
    <ligand>
        <name>pyruvate</name>
        <dbReference type="ChEBI" id="CHEBI:15361"/>
    </ligand>
</feature>
<feature type="binding site" evidence="1">
    <location>
        <position position="178"/>
    </location>
    <ligand>
        <name>FMN</name>
        <dbReference type="ChEBI" id="CHEBI:58210"/>
    </ligand>
</feature>
<feature type="binding site" evidence="1">
    <location>
        <position position="187"/>
    </location>
    <ligand>
        <name>pyruvate</name>
        <dbReference type="ChEBI" id="CHEBI:15361"/>
    </ligand>
</feature>
<feature type="binding site" evidence="1">
    <location>
        <position position="220"/>
    </location>
    <ligand>
        <name>pyruvate</name>
        <dbReference type="ChEBI" id="CHEBI:15361"/>
    </ligand>
</feature>
<feature type="binding site" evidence="1">
    <location>
        <position position="246"/>
    </location>
    <ligand>
        <name>FMN</name>
        <dbReference type="ChEBI" id="CHEBI:58210"/>
    </ligand>
</feature>
<feature type="binding site" evidence="1">
    <location>
        <position position="270"/>
    </location>
    <ligand>
        <name>pyruvate</name>
        <dbReference type="ChEBI" id="CHEBI:15361"/>
    </ligand>
</feature>
<feature type="binding site" evidence="1">
    <location>
        <position position="273"/>
    </location>
    <ligand>
        <name>pyruvate</name>
        <dbReference type="ChEBI" id="CHEBI:15361"/>
    </ligand>
</feature>
<feature type="binding site" evidence="1">
    <location>
        <begin position="301"/>
        <end position="305"/>
    </location>
    <ligand>
        <name>FMN</name>
        <dbReference type="ChEBI" id="CHEBI:58210"/>
    </ligand>
</feature>
<feature type="binding site" evidence="1">
    <location>
        <position position="325"/>
    </location>
    <ligand>
        <name>FMN</name>
        <dbReference type="ChEBI" id="CHEBI:58210"/>
    </ligand>
</feature>
<evidence type="ECO:0000250" key="1">
    <source>
        <dbReference type="UniProtKB" id="Q44467"/>
    </source>
</evidence>
<evidence type="ECO:0000255" key="2">
    <source>
        <dbReference type="PROSITE-ProRule" id="PRU00683"/>
    </source>
</evidence>
<evidence type="ECO:0000269" key="3">
    <source>
    </source>
</evidence>
<evidence type="ECO:0000303" key="4">
    <source>
    </source>
</evidence>
<evidence type="ECO:0000305" key="5">
    <source>
    </source>
</evidence>
<name>LOX_STRIN</name>
<protein>
    <recommendedName>
        <fullName evidence="4">L-lactate oxidase</fullName>
        <shortName>LOX</shortName>
        <ecNumber evidence="3">1.1.3.-</ecNumber>
    </recommendedName>
</protein>
<accession>O33655</accession>
<proteinExistence type="evidence at protein level"/>
<gene>
    <name evidence="4" type="primary">lctO</name>
</gene>